<gene>
    <name evidence="1" type="primary">udk</name>
    <name type="ordered locus">ESA_01152</name>
</gene>
<organism>
    <name type="scientific">Cronobacter sakazakii (strain ATCC BAA-894)</name>
    <name type="common">Enterobacter sakazakii</name>
    <dbReference type="NCBI Taxonomy" id="290339"/>
    <lineage>
        <taxon>Bacteria</taxon>
        <taxon>Pseudomonadati</taxon>
        <taxon>Pseudomonadota</taxon>
        <taxon>Gammaproteobacteria</taxon>
        <taxon>Enterobacterales</taxon>
        <taxon>Enterobacteriaceae</taxon>
        <taxon>Cronobacter</taxon>
    </lineage>
</organism>
<comment type="catalytic activity">
    <reaction evidence="1">
        <text>uridine + ATP = UMP + ADP + H(+)</text>
        <dbReference type="Rhea" id="RHEA:16825"/>
        <dbReference type="ChEBI" id="CHEBI:15378"/>
        <dbReference type="ChEBI" id="CHEBI:16704"/>
        <dbReference type="ChEBI" id="CHEBI:30616"/>
        <dbReference type="ChEBI" id="CHEBI:57865"/>
        <dbReference type="ChEBI" id="CHEBI:456216"/>
        <dbReference type="EC" id="2.7.1.48"/>
    </reaction>
</comment>
<comment type="catalytic activity">
    <reaction evidence="1">
        <text>cytidine + ATP = CMP + ADP + H(+)</text>
        <dbReference type="Rhea" id="RHEA:24674"/>
        <dbReference type="ChEBI" id="CHEBI:15378"/>
        <dbReference type="ChEBI" id="CHEBI:17562"/>
        <dbReference type="ChEBI" id="CHEBI:30616"/>
        <dbReference type="ChEBI" id="CHEBI:60377"/>
        <dbReference type="ChEBI" id="CHEBI:456216"/>
        <dbReference type="EC" id="2.7.1.48"/>
    </reaction>
</comment>
<comment type="pathway">
    <text evidence="1">Pyrimidine metabolism; CTP biosynthesis via salvage pathway; CTP from cytidine: step 1/3.</text>
</comment>
<comment type="pathway">
    <text evidence="1">Pyrimidine metabolism; UMP biosynthesis via salvage pathway; UMP from uridine: step 1/1.</text>
</comment>
<comment type="subcellular location">
    <subcellularLocation>
        <location evidence="1">Cytoplasm</location>
    </subcellularLocation>
</comment>
<comment type="similarity">
    <text evidence="1">Belongs to the uridine kinase family.</text>
</comment>
<keyword id="KW-0067">ATP-binding</keyword>
<keyword id="KW-0963">Cytoplasm</keyword>
<keyword id="KW-0418">Kinase</keyword>
<keyword id="KW-0547">Nucleotide-binding</keyword>
<keyword id="KW-1185">Reference proteome</keyword>
<keyword id="KW-0808">Transferase</keyword>
<accession>A7MHG8</accession>
<reference key="1">
    <citation type="journal article" date="2010" name="PLoS ONE">
        <title>Genome sequence of Cronobacter sakazakii BAA-894 and comparative genomic hybridization analysis with other Cronobacter species.</title>
        <authorList>
            <person name="Kucerova E."/>
            <person name="Clifton S.W."/>
            <person name="Xia X.Q."/>
            <person name="Long F."/>
            <person name="Porwollik S."/>
            <person name="Fulton L."/>
            <person name="Fronick C."/>
            <person name="Minx P."/>
            <person name="Kyung K."/>
            <person name="Warren W."/>
            <person name="Fulton R."/>
            <person name="Feng D."/>
            <person name="Wollam A."/>
            <person name="Shah N."/>
            <person name="Bhonagiri V."/>
            <person name="Nash W.E."/>
            <person name="Hallsworth-Pepin K."/>
            <person name="Wilson R.K."/>
            <person name="McClelland M."/>
            <person name="Forsythe S.J."/>
        </authorList>
    </citation>
    <scope>NUCLEOTIDE SEQUENCE [LARGE SCALE GENOMIC DNA]</scope>
    <source>
        <strain>ATCC BAA-894</strain>
    </source>
</reference>
<dbReference type="EC" id="2.7.1.48" evidence="1"/>
<dbReference type="EMBL" id="CP000783">
    <property type="protein sequence ID" value="ABU76419.1"/>
    <property type="molecule type" value="Genomic_DNA"/>
</dbReference>
<dbReference type="RefSeq" id="WP_004386755.1">
    <property type="nucleotide sequence ID" value="NC_009778.1"/>
</dbReference>
<dbReference type="SMR" id="A7MHG8"/>
<dbReference type="GeneID" id="92805666"/>
<dbReference type="KEGG" id="esa:ESA_01152"/>
<dbReference type="HOGENOM" id="CLU_021278_1_2_6"/>
<dbReference type="UniPathway" id="UPA00574">
    <property type="reaction ID" value="UER00637"/>
</dbReference>
<dbReference type="UniPathway" id="UPA00579">
    <property type="reaction ID" value="UER00640"/>
</dbReference>
<dbReference type="Proteomes" id="UP000000260">
    <property type="component" value="Chromosome"/>
</dbReference>
<dbReference type="GO" id="GO:0005737">
    <property type="term" value="C:cytoplasm"/>
    <property type="evidence" value="ECO:0007669"/>
    <property type="project" value="UniProtKB-SubCell"/>
</dbReference>
<dbReference type="GO" id="GO:0005524">
    <property type="term" value="F:ATP binding"/>
    <property type="evidence" value="ECO:0007669"/>
    <property type="project" value="UniProtKB-UniRule"/>
</dbReference>
<dbReference type="GO" id="GO:0043771">
    <property type="term" value="F:cytidine kinase activity"/>
    <property type="evidence" value="ECO:0007669"/>
    <property type="project" value="RHEA"/>
</dbReference>
<dbReference type="GO" id="GO:0004849">
    <property type="term" value="F:uridine kinase activity"/>
    <property type="evidence" value="ECO:0007669"/>
    <property type="project" value="UniProtKB-UniRule"/>
</dbReference>
<dbReference type="GO" id="GO:0044211">
    <property type="term" value="P:CTP salvage"/>
    <property type="evidence" value="ECO:0007669"/>
    <property type="project" value="UniProtKB-UniRule"/>
</dbReference>
<dbReference type="GO" id="GO:0044206">
    <property type="term" value="P:UMP salvage"/>
    <property type="evidence" value="ECO:0007669"/>
    <property type="project" value="UniProtKB-UniRule"/>
</dbReference>
<dbReference type="CDD" id="cd02023">
    <property type="entry name" value="UMPK"/>
    <property type="match status" value="1"/>
</dbReference>
<dbReference type="FunFam" id="3.40.50.300:FF:000252">
    <property type="entry name" value="Uridine kinase"/>
    <property type="match status" value="1"/>
</dbReference>
<dbReference type="Gene3D" id="3.40.50.300">
    <property type="entry name" value="P-loop containing nucleotide triphosphate hydrolases"/>
    <property type="match status" value="1"/>
</dbReference>
<dbReference type="HAMAP" id="MF_00551">
    <property type="entry name" value="Uridine_kinase"/>
    <property type="match status" value="1"/>
</dbReference>
<dbReference type="InterPro" id="IPR027417">
    <property type="entry name" value="P-loop_NTPase"/>
</dbReference>
<dbReference type="InterPro" id="IPR006083">
    <property type="entry name" value="PRK/URK"/>
</dbReference>
<dbReference type="InterPro" id="IPR026008">
    <property type="entry name" value="Uridine_kinase"/>
</dbReference>
<dbReference type="InterPro" id="IPR000764">
    <property type="entry name" value="Uridine_kinase-like"/>
</dbReference>
<dbReference type="NCBIfam" id="NF004018">
    <property type="entry name" value="PRK05480.1"/>
    <property type="match status" value="1"/>
</dbReference>
<dbReference type="NCBIfam" id="TIGR00235">
    <property type="entry name" value="udk"/>
    <property type="match status" value="1"/>
</dbReference>
<dbReference type="PANTHER" id="PTHR10285">
    <property type="entry name" value="URIDINE KINASE"/>
    <property type="match status" value="1"/>
</dbReference>
<dbReference type="Pfam" id="PF00485">
    <property type="entry name" value="PRK"/>
    <property type="match status" value="1"/>
</dbReference>
<dbReference type="PRINTS" id="PR00988">
    <property type="entry name" value="URIDINKINASE"/>
</dbReference>
<dbReference type="SUPFAM" id="SSF52540">
    <property type="entry name" value="P-loop containing nucleoside triphosphate hydrolases"/>
    <property type="match status" value="1"/>
</dbReference>
<proteinExistence type="inferred from homology"/>
<evidence type="ECO:0000255" key="1">
    <source>
        <dbReference type="HAMAP-Rule" id="MF_00551"/>
    </source>
</evidence>
<protein>
    <recommendedName>
        <fullName evidence="1">Uridine kinase</fullName>
        <ecNumber evidence="1">2.7.1.48</ecNumber>
    </recommendedName>
    <alternativeName>
        <fullName evidence="1">Cytidine monophosphokinase</fullName>
    </alternativeName>
    <alternativeName>
        <fullName evidence="1">Uridine monophosphokinase</fullName>
    </alternativeName>
</protein>
<feature type="chain" id="PRO_1000017873" description="Uridine kinase">
    <location>
        <begin position="1"/>
        <end position="213"/>
    </location>
</feature>
<feature type="binding site" evidence="1">
    <location>
        <begin position="15"/>
        <end position="22"/>
    </location>
    <ligand>
        <name>ATP</name>
        <dbReference type="ChEBI" id="CHEBI:30616"/>
    </ligand>
</feature>
<sequence>MTDKSHQCVIIGIAGASASGKSLIASTLYRELREQVGDEHIGVIPEDSYYKDQSHLSMEERVKTNYDHPNAMDHNLLFQHLQMLKAGKPIELPVYSYVEHTRTAQTVHIEPKKVIILEGILLLTDARLREEMNFSIFVDTPLDICLMRRIKRDVNERGRSMDSVMTQYQKTVRPMFLQFIDPSKQYADIIVPRGGKNRIAIDILKAKISQFFE</sequence>
<name>URK_CROS8</name>